<comment type="function">
    <text evidence="3">Maternally-contributed central cell peptide regulating suspensor development and correct auxin distribution in early developing embryos.</text>
</comment>
<comment type="tissue specificity">
    <text evidence="3">Expressed exclusively in ovule embryo sacs and in early developing endosperms.</text>
</comment>
<comment type="developmental stage">
    <text evidence="3">Primarily expressed in the central cell gamete of nonfrtilized ovules, which upon fertilization gives rise to the endosperm, and later in the micropylar endosperm, which surrounds the embryo.</text>
</comment>
<comment type="disruption phenotype">
    <text evidence="3">No visible phenotype, due to redundancy with ESF1.1 and ESF1.3. Simultaneous down-regulation of all 3 genes by RNAi induces embryo abnormalities.</text>
</comment>
<comment type="similarity">
    <text evidence="4">Belongs to the MEG family.</text>
</comment>
<keyword id="KW-0217">Developmental protein</keyword>
<keyword id="KW-1015">Disulfide bond</keyword>
<keyword id="KW-1185">Reference proteome</keyword>
<keyword id="KW-0732">Signal</keyword>
<name>ESF12_ARATH</name>
<accession>A8MQX3</accession>
<gene>
    <name type="primary">ESF1.2</name>
    <name type="synonym">MEG1.2</name>
    <name type="ordered locus">At1g10745</name>
    <name type="ORF">F20B24</name>
    <name type="ORF">T16B5</name>
</gene>
<dbReference type="EMBL" id="AC007354">
    <property type="status" value="NOT_ANNOTATED_CDS"/>
    <property type="molecule type" value="Genomic_DNA"/>
</dbReference>
<dbReference type="EMBL" id="AC009398">
    <property type="status" value="NOT_ANNOTATED_CDS"/>
    <property type="molecule type" value="Genomic_DNA"/>
</dbReference>
<dbReference type="EMBL" id="CP002684">
    <property type="protein sequence ID" value="AEE28640.1"/>
    <property type="molecule type" value="Genomic_DNA"/>
</dbReference>
<dbReference type="RefSeq" id="NP_001077510.1">
    <property type="nucleotide sequence ID" value="NM_001084041.2"/>
</dbReference>
<dbReference type="SMR" id="A8MQX3"/>
<dbReference type="STRING" id="3702.A8MQX3"/>
<dbReference type="PaxDb" id="3702-AT1G10745.1"/>
<dbReference type="EnsemblPlants" id="AT1G10745.1">
    <property type="protein sequence ID" value="AT1G10745.1"/>
    <property type="gene ID" value="AT1G10745"/>
</dbReference>
<dbReference type="GeneID" id="5007679"/>
<dbReference type="Gramene" id="AT1G10745.1">
    <property type="protein sequence ID" value="AT1G10745.1"/>
    <property type="gene ID" value="AT1G10745"/>
</dbReference>
<dbReference type="KEGG" id="ath:AT1G10745"/>
<dbReference type="Araport" id="AT1G10745"/>
<dbReference type="TAIR" id="AT1G10745">
    <property type="gene designation" value="ESF1.2"/>
</dbReference>
<dbReference type="HOGENOM" id="CLU_183999_1_0_1"/>
<dbReference type="InParanoid" id="A8MQX3"/>
<dbReference type="OMA" id="QKECESN"/>
<dbReference type="PhylomeDB" id="A8MQX3"/>
<dbReference type="PRO" id="PR:A8MQX3"/>
<dbReference type="Proteomes" id="UP000006548">
    <property type="component" value="Chromosome 1"/>
</dbReference>
<dbReference type="ExpressionAtlas" id="A8MQX3">
    <property type="expression patterns" value="baseline"/>
</dbReference>
<dbReference type="GO" id="GO:0000578">
    <property type="term" value="P:embryonic axis specification"/>
    <property type="evidence" value="ECO:0000315"/>
    <property type="project" value="UniProtKB"/>
</dbReference>
<dbReference type="GO" id="GO:0010098">
    <property type="term" value="P:suspensor development"/>
    <property type="evidence" value="ECO:0000315"/>
    <property type="project" value="UniProtKB"/>
</dbReference>
<dbReference type="InterPro" id="IPR041608">
    <property type="entry name" value="ESF1_brassicaceae"/>
</dbReference>
<dbReference type="Pfam" id="PF18209">
    <property type="entry name" value="ESF1"/>
    <property type="match status" value="1"/>
</dbReference>
<proteinExistence type="evidence at transcript level"/>
<protein>
    <recommendedName>
        <fullName>EMBRYO SURROUNDING FACTOR 1.2</fullName>
    </recommendedName>
    <alternativeName>
        <fullName>Maternally expressed family protein 1.2</fullName>
    </alternativeName>
    <alternativeName>
        <fullName>Maternally expressed gene 1.2</fullName>
    </alternativeName>
</protein>
<sequence>MKSQTVLISIFIFSFFALHQCMQMDVGEIEGSNKISIGKCVPAQCSVSFFKRDCWCCFRDQSMCSKTQKECESNPRCPPLKF</sequence>
<organism>
    <name type="scientific">Arabidopsis thaliana</name>
    <name type="common">Mouse-ear cress</name>
    <dbReference type="NCBI Taxonomy" id="3702"/>
    <lineage>
        <taxon>Eukaryota</taxon>
        <taxon>Viridiplantae</taxon>
        <taxon>Streptophyta</taxon>
        <taxon>Embryophyta</taxon>
        <taxon>Tracheophyta</taxon>
        <taxon>Spermatophyta</taxon>
        <taxon>Magnoliopsida</taxon>
        <taxon>eudicotyledons</taxon>
        <taxon>Gunneridae</taxon>
        <taxon>Pentapetalae</taxon>
        <taxon>rosids</taxon>
        <taxon>malvids</taxon>
        <taxon>Brassicales</taxon>
        <taxon>Brassicaceae</taxon>
        <taxon>Camelineae</taxon>
        <taxon>Arabidopsis</taxon>
    </lineage>
</organism>
<reference key="1">
    <citation type="journal article" date="2000" name="Nature">
        <title>Sequence and analysis of chromosome 1 of the plant Arabidopsis thaliana.</title>
        <authorList>
            <person name="Theologis A."/>
            <person name="Ecker J.R."/>
            <person name="Palm C.J."/>
            <person name="Federspiel N.A."/>
            <person name="Kaul S."/>
            <person name="White O."/>
            <person name="Alonso J."/>
            <person name="Altafi H."/>
            <person name="Araujo R."/>
            <person name="Bowman C.L."/>
            <person name="Brooks S.Y."/>
            <person name="Buehler E."/>
            <person name="Chan A."/>
            <person name="Chao Q."/>
            <person name="Chen H."/>
            <person name="Cheuk R.F."/>
            <person name="Chin C.W."/>
            <person name="Chung M.K."/>
            <person name="Conn L."/>
            <person name="Conway A.B."/>
            <person name="Conway A.R."/>
            <person name="Creasy T.H."/>
            <person name="Dewar K."/>
            <person name="Dunn P."/>
            <person name="Etgu P."/>
            <person name="Feldblyum T.V."/>
            <person name="Feng J.-D."/>
            <person name="Fong B."/>
            <person name="Fujii C.Y."/>
            <person name="Gill J.E."/>
            <person name="Goldsmith A.D."/>
            <person name="Haas B."/>
            <person name="Hansen N.F."/>
            <person name="Hughes B."/>
            <person name="Huizar L."/>
            <person name="Hunter J.L."/>
            <person name="Jenkins J."/>
            <person name="Johnson-Hopson C."/>
            <person name="Khan S."/>
            <person name="Khaykin E."/>
            <person name="Kim C.J."/>
            <person name="Koo H.L."/>
            <person name="Kremenetskaia I."/>
            <person name="Kurtz D.B."/>
            <person name="Kwan A."/>
            <person name="Lam B."/>
            <person name="Langin-Hooper S."/>
            <person name="Lee A."/>
            <person name="Lee J.M."/>
            <person name="Lenz C.A."/>
            <person name="Li J.H."/>
            <person name="Li Y.-P."/>
            <person name="Lin X."/>
            <person name="Liu S.X."/>
            <person name="Liu Z.A."/>
            <person name="Luros J.S."/>
            <person name="Maiti R."/>
            <person name="Marziali A."/>
            <person name="Militscher J."/>
            <person name="Miranda M."/>
            <person name="Nguyen M."/>
            <person name="Nierman W.C."/>
            <person name="Osborne B.I."/>
            <person name="Pai G."/>
            <person name="Peterson J."/>
            <person name="Pham P.K."/>
            <person name="Rizzo M."/>
            <person name="Rooney T."/>
            <person name="Rowley D."/>
            <person name="Sakano H."/>
            <person name="Salzberg S.L."/>
            <person name="Schwartz J.R."/>
            <person name="Shinn P."/>
            <person name="Southwick A.M."/>
            <person name="Sun H."/>
            <person name="Tallon L.J."/>
            <person name="Tambunga G."/>
            <person name="Toriumi M.J."/>
            <person name="Town C.D."/>
            <person name="Utterback T."/>
            <person name="Van Aken S."/>
            <person name="Vaysberg M."/>
            <person name="Vysotskaia V.S."/>
            <person name="Walker M."/>
            <person name="Wu D."/>
            <person name="Yu G."/>
            <person name="Fraser C.M."/>
            <person name="Venter J.C."/>
            <person name="Davis R.W."/>
        </authorList>
    </citation>
    <scope>NUCLEOTIDE SEQUENCE [LARGE SCALE GENOMIC DNA]</scope>
    <source>
        <strain>cv. Columbia</strain>
    </source>
</reference>
<reference key="2">
    <citation type="journal article" date="2017" name="Plant J.">
        <title>Araport11: a complete reannotation of the Arabidopsis thaliana reference genome.</title>
        <authorList>
            <person name="Cheng C.Y."/>
            <person name="Krishnakumar V."/>
            <person name="Chan A.P."/>
            <person name="Thibaud-Nissen F."/>
            <person name="Schobel S."/>
            <person name="Town C.D."/>
        </authorList>
    </citation>
    <scope>GENOME REANNOTATION</scope>
    <source>
        <strain>cv. Columbia</strain>
    </source>
</reference>
<reference key="3">
    <citation type="journal article" date="2014" name="Science">
        <title>Central cell-derived peptides regulate early embryo patterning in flowering plants.</title>
        <authorList>
            <person name="Costa L.M."/>
            <person name="Marshall E."/>
            <person name="Tesfaye M."/>
            <person name="Silverstein K.A."/>
            <person name="Mori M."/>
            <person name="Umetsu Y."/>
            <person name="Otterbach S.L."/>
            <person name="Papareddy R."/>
            <person name="Dickinson H.G."/>
            <person name="Boutiller K."/>
            <person name="VandenBosch K.A."/>
            <person name="Ohki S."/>
            <person name="Gutierrez-Marcos J.F."/>
        </authorList>
    </citation>
    <scope>FUNCTION</scope>
    <scope>TISSUE SPECIFICITY</scope>
    <scope>DEVELOPMENTAL STAGE</scope>
    <scope>DISRUPTION PHENOTYPE</scope>
</reference>
<evidence type="ECO:0000250" key="1"/>
<evidence type="ECO:0000255" key="2"/>
<evidence type="ECO:0000269" key="3">
    <source>
    </source>
</evidence>
<evidence type="ECO:0000305" key="4"/>
<feature type="signal peptide" evidence="2">
    <location>
        <begin position="1"/>
        <end position="23"/>
    </location>
</feature>
<feature type="chain" id="PRO_0000430060" description="EMBRYO SURROUNDING FACTOR 1.2">
    <location>
        <begin position="24"/>
        <end position="82"/>
    </location>
</feature>
<feature type="disulfide bond" evidence="1">
    <location>
        <begin position="40"/>
        <end position="56"/>
    </location>
</feature>
<feature type="disulfide bond" evidence="1">
    <location>
        <begin position="45"/>
        <end position="77"/>
    </location>
</feature>
<feature type="disulfide bond" evidence="1">
    <location>
        <begin position="54"/>
        <end position="71"/>
    </location>
</feature>
<feature type="disulfide bond" evidence="1">
    <location>
        <begin position="57"/>
        <end position="64"/>
    </location>
</feature>